<comment type="function">
    <text evidence="1">Acts as an inhibitor of bacterial RNA polymerase by interacting with RpoC subunit and thus preventing promoter recognition by RpoE. Non-DNA-binding transcription factor that plays a role in the transcriptional switch that abolishes transcription of the viral early genes (class I) by the host RNA polymerase but allows transcription of late genes (class II and class III) by T7 RNA polymerase.</text>
</comment>
<comment type="subunit">
    <text evidence="1">Interacts with host RpoC; this interaction inhibits host RNA polymerase activity.</text>
</comment>
<gene>
    <name type="ordered locus">2</name>
</gene>
<organism>
    <name type="scientific">Escherichia phage T7</name>
    <name type="common">Bacteriophage T7</name>
    <dbReference type="NCBI Taxonomy" id="10760"/>
    <lineage>
        <taxon>Viruses</taxon>
        <taxon>Duplodnaviria</taxon>
        <taxon>Heunggongvirae</taxon>
        <taxon>Uroviricota</taxon>
        <taxon>Caudoviricetes</taxon>
        <taxon>Autographiviridae</taxon>
        <taxon>Studiervirinae</taxon>
        <taxon>Teseptimavirus</taxon>
        <taxon>Teseptimavirus T7</taxon>
    </lineage>
</organism>
<accession>P03704</accession>
<dbReference type="EMBL" id="V01146">
    <property type="protein sequence ID" value="CAA24399.1"/>
    <property type="molecule type" value="Genomic_DNA"/>
</dbReference>
<dbReference type="EMBL" id="V01127">
    <property type="protein sequence ID" value="CAA24342.1"/>
    <property type="molecule type" value="Genomic_DNA"/>
</dbReference>
<dbReference type="PIR" id="G94615">
    <property type="entry name" value="JRBP27"/>
</dbReference>
<dbReference type="RefSeq" id="NP_041969.1">
    <property type="nucleotide sequence ID" value="NC_001604.1"/>
</dbReference>
<dbReference type="PDB" id="2LMC">
    <property type="method" value="NMR"/>
    <property type="chains" value="A=1-60"/>
</dbReference>
<dbReference type="PDB" id="2WNM">
    <property type="method" value="NMR"/>
    <property type="chains" value="A=1-64"/>
</dbReference>
<dbReference type="PDB" id="4LK0">
    <property type="method" value="X-ray"/>
    <property type="resolution" value="3.91 A"/>
    <property type="chains" value="M/N=1-64"/>
</dbReference>
<dbReference type="PDB" id="4LLG">
    <property type="method" value="X-ray"/>
    <property type="resolution" value="3.79 A"/>
    <property type="chains" value="M/N=1-64"/>
</dbReference>
<dbReference type="PDBsum" id="2LMC"/>
<dbReference type="PDBsum" id="2WNM"/>
<dbReference type="PDBsum" id="4LK0"/>
<dbReference type="PDBsum" id="4LLG"/>
<dbReference type="BMRB" id="P03704"/>
<dbReference type="SMR" id="P03704"/>
<dbReference type="IntAct" id="P03704">
    <property type="interactions" value="1"/>
</dbReference>
<dbReference type="MINT" id="P03704"/>
<dbReference type="KEGG" id="vg:1261073"/>
<dbReference type="OrthoDB" id="23107at10239"/>
<dbReference type="EvolutionaryTrace" id="P03704"/>
<dbReference type="Proteomes" id="UP000000840">
    <property type="component" value="Genome"/>
</dbReference>
<dbReference type="GO" id="GO:0039657">
    <property type="term" value="P:symbiont-mediated suppression of host gene expression"/>
    <property type="evidence" value="ECO:0007669"/>
    <property type="project" value="UniProtKB-KW"/>
</dbReference>
<dbReference type="GO" id="GO:0039653">
    <property type="term" value="P:symbiont-mediated suppression of host transcription"/>
    <property type="evidence" value="ECO:0000314"/>
    <property type="project" value="UniProtKB"/>
</dbReference>
<dbReference type="FunFam" id="3.10.20.510:FF:000001">
    <property type="entry name" value="Bacterial RNA polymerase inhibitor"/>
    <property type="match status" value="1"/>
</dbReference>
<dbReference type="Gene3D" id="3.10.20.510">
    <property type="entry name" value="RNA polymerase inhibitor"/>
    <property type="match status" value="1"/>
</dbReference>
<dbReference type="InterPro" id="IPR016412">
    <property type="entry name" value="RNA_pol_inhibitor"/>
</dbReference>
<dbReference type="InterPro" id="IPR038715">
    <property type="entry name" value="RNA_pol_inhibitor_sf"/>
</dbReference>
<dbReference type="Pfam" id="PF16857">
    <property type="entry name" value="RNA_pol_inhib"/>
    <property type="match status" value="1"/>
</dbReference>
<dbReference type="PIRSF" id="PIRSF004348">
    <property type="entry name" value="RNA_polymerase_inhibitor_gp2"/>
    <property type="match status" value="1"/>
</dbReference>
<sequence length="64" mass="7175">MSNVNTGSLSVDNKKFWATVESSEHSFEVPIYAETLDEALELAEWQYVPAGFEVTRVRPCVAPK</sequence>
<reference key="1">
    <citation type="journal article" date="1983" name="J. Mol. Biol.">
        <title>Complete nucleotide sequence of bacteriophage T7 DNA and the locations of T7 genetic elements.</title>
        <authorList>
            <person name="Dunn J.J."/>
            <person name="Studier F.W."/>
        </authorList>
    </citation>
    <scope>NUCLEOTIDE SEQUENCE [LARGE SCALE GENOMIC DNA]</scope>
</reference>
<reference key="2">
    <citation type="journal article" date="1981" name="J. Mol. Biol.">
        <title>Nucleotide sequence from the genetic left end of bacteriophage T7 DNA to the beginning of gene 4.</title>
        <authorList>
            <person name="Dunn J.J."/>
            <person name="Studier F.W."/>
        </authorList>
    </citation>
    <scope>NUCLEOTIDE SEQUENCE [GENOMIC DNA]</scope>
</reference>
<reference key="3">
    <citation type="journal article" date="1999" name="J. Mol. Biol.">
        <title>Inhibition of Escherichia coli RNA polymerase by bacteriophage T7 gene 2 protein.</title>
        <authorList>
            <person name="Nechaev S."/>
            <person name="Severinov K."/>
        </authorList>
    </citation>
    <scope>FUNCTION</scope>
    <scope>INTERACTION WITH RPOC</scope>
</reference>
<reference key="4">
    <citation type="journal article" date="2010" name="Proc. Natl. Acad. Sci. U.S.A.">
        <title>T7 phage protein Gp2 inhibits the Escherichia coli RNA polymerase by antagonizing stable DNA strand separation near the transcription start site.</title>
        <authorList>
            <person name="Camara B."/>
            <person name="Liu M."/>
            <person name="Reynolds J."/>
            <person name="Shadrin A."/>
            <person name="Liu B."/>
            <person name="Kwok K."/>
            <person name="Simpson P."/>
            <person name="Weinzierl R."/>
            <person name="Severinov K."/>
            <person name="Cota E."/>
            <person name="Matthews S."/>
            <person name="Wigneshweraraj S.R."/>
        </authorList>
    </citation>
    <scope>STRUCTURE BY NMR</scope>
</reference>
<reference key="5">
    <citation type="journal article" date="2012" name="Mol. Cell">
        <title>Structural and mechanistic basis for the inhibition of Escherichia coli RNA polymerase by T7 Gp2.</title>
        <authorList>
            <person name="James E."/>
            <person name="Liu M."/>
            <person name="Sheppard C."/>
            <person name="Mekler V."/>
            <person name="Camara B."/>
            <person name="Liu B."/>
            <person name="Simpson P."/>
            <person name="Cota E."/>
            <person name="Severinov K."/>
            <person name="Matthews S."/>
            <person name="Wigneshweraraj S."/>
        </authorList>
    </citation>
    <scope>STRUCTURE BY NMR</scope>
</reference>
<feature type="chain" id="PRO_0000106481" description="Bacterial RNA polymerase inhibitor">
    <location>
        <begin position="1"/>
        <end position="64"/>
    </location>
</feature>
<feature type="strand" evidence="2">
    <location>
        <begin position="13"/>
        <end position="21"/>
    </location>
</feature>
<feature type="strand" evidence="2">
    <location>
        <begin position="26"/>
        <end position="31"/>
    </location>
</feature>
<feature type="helix" evidence="2">
    <location>
        <begin position="36"/>
        <end position="45"/>
    </location>
</feature>
<feature type="helix" evidence="2">
    <location>
        <begin position="48"/>
        <end position="50"/>
    </location>
</feature>
<feature type="strand" evidence="2">
    <location>
        <begin position="53"/>
        <end position="60"/>
    </location>
</feature>
<protein>
    <recommendedName>
        <fullName>Bacterial RNA polymerase inhibitor</fullName>
    </recommendedName>
    <alternativeName>
        <fullName>Gene product 2</fullName>
        <shortName>Gp2</shortName>
    </alternativeName>
</protein>
<name>VRPI_BPT7</name>
<organismHost>
    <name type="scientific">Escherichia coli</name>
    <dbReference type="NCBI Taxonomy" id="562"/>
</organismHost>
<keyword id="KW-0002">3D-structure</keyword>
<keyword id="KW-1261">Bacterial host gene expression shutoff by virus</keyword>
<keyword id="KW-1263">Bacterial host transcription shutoff by virus</keyword>
<keyword id="KW-1190">Host gene expression shutoff by virus</keyword>
<keyword id="KW-0945">Host-virus interaction</keyword>
<keyword id="KW-1185">Reference proteome</keyword>
<proteinExistence type="evidence at protein level"/>
<evidence type="ECO:0000269" key="1">
    <source>
    </source>
</evidence>
<evidence type="ECO:0007829" key="2">
    <source>
        <dbReference type="PDB" id="2LMC"/>
    </source>
</evidence>